<dbReference type="EC" id="7.1.1.9"/>
<dbReference type="EMBL" id="L09121">
    <property type="protein sequence ID" value="AAB00369.1"/>
    <property type="molecule type" value="Genomic_DNA"/>
</dbReference>
<dbReference type="EMBL" id="AP008226">
    <property type="protein sequence ID" value="BAD70957.1"/>
    <property type="molecule type" value="Genomic_DNA"/>
</dbReference>
<dbReference type="PIR" id="T52480">
    <property type="entry name" value="T52480"/>
</dbReference>
<dbReference type="RefSeq" id="WP_011173203.1">
    <property type="nucleotide sequence ID" value="NC_006461.1"/>
</dbReference>
<dbReference type="RefSeq" id="YP_144400.1">
    <property type="nucleotide sequence ID" value="NC_006461.1"/>
</dbReference>
<dbReference type="PDB" id="1EHK">
    <property type="method" value="X-ray"/>
    <property type="resolution" value="2.40 A"/>
    <property type="chains" value="B=1-168"/>
</dbReference>
<dbReference type="PDB" id="2QPD">
    <property type="method" value="X-ray"/>
    <property type="resolution" value="3.25 A"/>
    <property type="chains" value="B=1-168"/>
</dbReference>
<dbReference type="PDB" id="2QPE">
    <property type="method" value="X-ray"/>
    <property type="resolution" value="2.90 A"/>
    <property type="chains" value="B=1-168"/>
</dbReference>
<dbReference type="PDB" id="3BVD">
    <property type="method" value="X-ray"/>
    <property type="resolution" value="3.37 A"/>
    <property type="chains" value="B=1-168"/>
</dbReference>
<dbReference type="PDB" id="3EH3">
    <property type="method" value="X-ray"/>
    <property type="resolution" value="3.10 A"/>
    <property type="chains" value="B=3-168"/>
</dbReference>
<dbReference type="PDB" id="3EH4">
    <property type="method" value="X-ray"/>
    <property type="resolution" value="2.90 A"/>
    <property type="chains" value="B=3-168"/>
</dbReference>
<dbReference type="PDB" id="3EH5">
    <property type="method" value="X-ray"/>
    <property type="resolution" value="2.80 A"/>
    <property type="chains" value="B=3-168"/>
</dbReference>
<dbReference type="PDB" id="3QJQ">
    <property type="method" value="X-ray"/>
    <property type="resolution" value="2.90 A"/>
    <property type="chains" value="B=1-168"/>
</dbReference>
<dbReference type="PDB" id="3QJR">
    <property type="method" value="X-ray"/>
    <property type="resolution" value="3.20 A"/>
    <property type="chains" value="B=1-168"/>
</dbReference>
<dbReference type="PDB" id="3QJS">
    <property type="method" value="X-ray"/>
    <property type="resolution" value="2.80 A"/>
    <property type="chains" value="B=1-168"/>
</dbReference>
<dbReference type="PDB" id="3QJT">
    <property type="method" value="X-ray"/>
    <property type="resolution" value="2.95 A"/>
    <property type="chains" value="B=1-168"/>
</dbReference>
<dbReference type="PDB" id="3QJU">
    <property type="method" value="X-ray"/>
    <property type="resolution" value="2.90 A"/>
    <property type="chains" value="B=1-168"/>
</dbReference>
<dbReference type="PDB" id="3QJV">
    <property type="method" value="X-ray"/>
    <property type="resolution" value="2.80 A"/>
    <property type="chains" value="B=1-168"/>
</dbReference>
<dbReference type="PDB" id="3S33">
    <property type="method" value="X-ray"/>
    <property type="resolution" value="4.45 A"/>
    <property type="chains" value="B=3-168"/>
</dbReference>
<dbReference type="PDB" id="3S38">
    <property type="method" value="X-ray"/>
    <property type="resolution" value="4.20 A"/>
    <property type="chains" value="B=3-168"/>
</dbReference>
<dbReference type="PDB" id="3S39">
    <property type="method" value="X-ray"/>
    <property type="resolution" value="4.80 A"/>
    <property type="chains" value="B=3-168"/>
</dbReference>
<dbReference type="PDB" id="3S3A">
    <property type="method" value="X-ray"/>
    <property type="resolution" value="4.25 A"/>
    <property type="chains" value="B=3-168"/>
</dbReference>
<dbReference type="PDB" id="3S3B">
    <property type="method" value="X-ray"/>
    <property type="resolution" value="3.30 A"/>
    <property type="chains" value="B=3-168"/>
</dbReference>
<dbReference type="PDB" id="3S3C">
    <property type="method" value="X-ray"/>
    <property type="resolution" value="4.00 A"/>
    <property type="chains" value="B=3-168"/>
</dbReference>
<dbReference type="PDB" id="3S3D">
    <property type="method" value="X-ray"/>
    <property type="resolution" value="3.75 A"/>
    <property type="chains" value="B=3-168"/>
</dbReference>
<dbReference type="PDB" id="3S8F">
    <property type="method" value="X-ray"/>
    <property type="resolution" value="1.80 A"/>
    <property type="chains" value="B=1-168"/>
</dbReference>
<dbReference type="PDB" id="3S8G">
    <property type="method" value="X-ray"/>
    <property type="resolution" value="1.80 A"/>
    <property type="chains" value="B=1-168"/>
</dbReference>
<dbReference type="PDB" id="4FA7">
    <property type="method" value="X-ray"/>
    <property type="resolution" value="2.50 A"/>
    <property type="chains" value="B=1-168"/>
</dbReference>
<dbReference type="PDB" id="4FAA">
    <property type="method" value="X-ray"/>
    <property type="resolution" value="2.80 A"/>
    <property type="chains" value="B=1-168"/>
</dbReference>
<dbReference type="PDB" id="4G70">
    <property type="method" value="X-ray"/>
    <property type="resolution" value="2.60 A"/>
    <property type="chains" value="B=1-168"/>
</dbReference>
<dbReference type="PDB" id="4G71">
    <property type="method" value="X-ray"/>
    <property type="resolution" value="2.90 A"/>
    <property type="chains" value="B=1-168"/>
</dbReference>
<dbReference type="PDB" id="4G72">
    <property type="method" value="X-ray"/>
    <property type="resolution" value="3.19 A"/>
    <property type="chains" value="B=1-168"/>
</dbReference>
<dbReference type="PDB" id="4G7Q">
    <property type="method" value="X-ray"/>
    <property type="resolution" value="2.60 A"/>
    <property type="chains" value="B=1-168"/>
</dbReference>
<dbReference type="PDB" id="4G7R">
    <property type="method" value="X-ray"/>
    <property type="resolution" value="3.05 A"/>
    <property type="chains" value="B=1-168"/>
</dbReference>
<dbReference type="PDB" id="4G7S">
    <property type="method" value="X-ray"/>
    <property type="resolution" value="2.00 A"/>
    <property type="chains" value="B=1-168"/>
</dbReference>
<dbReference type="PDB" id="4GP4">
    <property type="method" value="X-ray"/>
    <property type="resolution" value="2.80 A"/>
    <property type="chains" value="B=1-168"/>
</dbReference>
<dbReference type="PDB" id="4GP5">
    <property type="method" value="X-ray"/>
    <property type="resolution" value="2.70 A"/>
    <property type="chains" value="B=1-168"/>
</dbReference>
<dbReference type="PDB" id="4GP8">
    <property type="method" value="X-ray"/>
    <property type="resolution" value="2.80 A"/>
    <property type="chains" value="B=1-168"/>
</dbReference>
<dbReference type="PDB" id="4N4Y">
    <property type="method" value="X-ray"/>
    <property type="resolution" value="2.90 A"/>
    <property type="chains" value="B=1-168"/>
</dbReference>
<dbReference type="PDB" id="5NDC">
    <property type="method" value="X-ray"/>
    <property type="resolution" value="2.30 A"/>
    <property type="chains" value="B=1-168"/>
</dbReference>
<dbReference type="PDB" id="5U7N">
    <property type="method" value="X-ray"/>
    <property type="resolution" value="2.30 A"/>
    <property type="chains" value="A/B/C/D/E/F/G/H=44-149, A/B/C/D/E/F/G/H=160-168"/>
</dbReference>
<dbReference type="PDB" id="6PTT">
    <property type="method" value="X-ray"/>
    <property type="resolution" value="1.84 A"/>
    <property type="chains" value="A/B=44-168"/>
</dbReference>
<dbReference type="PDB" id="6PTY">
    <property type="method" value="X-ray"/>
    <property type="resolution" value="1.98 A"/>
    <property type="chains" value="A/B=44-168"/>
</dbReference>
<dbReference type="PDB" id="8AJZ">
    <property type="method" value="X-ray"/>
    <property type="resolution" value="2.00 A"/>
    <property type="chains" value="B=1-168"/>
</dbReference>
<dbReference type="PDB" id="8HUA">
    <property type="method" value="X-ray"/>
    <property type="resolution" value="2.12 A"/>
    <property type="chains" value="B=1-168"/>
</dbReference>
<dbReference type="PDB" id="8K65">
    <property type="method" value="X-ray"/>
    <property type="resolution" value="2.00 A"/>
    <property type="chains" value="B=1-168"/>
</dbReference>
<dbReference type="PDB" id="8K6Y">
    <property type="method" value="X-ray"/>
    <property type="resolution" value="2.00 A"/>
    <property type="chains" value="B=1-168"/>
</dbReference>
<dbReference type="PDBsum" id="1EHK"/>
<dbReference type="PDBsum" id="2QPD"/>
<dbReference type="PDBsum" id="2QPE"/>
<dbReference type="PDBsum" id="3BVD"/>
<dbReference type="PDBsum" id="3EH3"/>
<dbReference type="PDBsum" id="3EH4"/>
<dbReference type="PDBsum" id="3EH5"/>
<dbReference type="PDBsum" id="3QJQ"/>
<dbReference type="PDBsum" id="3QJR"/>
<dbReference type="PDBsum" id="3QJS"/>
<dbReference type="PDBsum" id="3QJT"/>
<dbReference type="PDBsum" id="3QJU"/>
<dbReference type="PDBsum" id="3QJV"/>
<dbReference type="PDBsum" id="3S33"/>
<dbReference type="PDBsum" id="3S38"/>
<dbReference type="PDBsum" id="3S39"/>
<dbReference type="PDBsum" id="3S3A"/>
<dbReference type="PDBsum" id="3S3B"/>
<dbReference type="PDBsum" id="3S3C"/>
<dbReference type="PDBsum" id="3S3D"/>
<dbReference type="PDBsum" id="3S8F"/>
<dbReference type="PDBsum" id="3S8G"/>
<dbReference type="PDBsum" id="4FA7"/>
<dbReference type="PDBsum" id="4FAA"/>
<dbReference type="PDBsum" id="4G70"/>
<dbReference type="PDBsum" id="4G71"/>
<dbReference type="PDBsum" id="4G72"/>
<dbReference type="PDBsum" id="4G7Q"/>
<dbReference type="PDBsum" id="4G7R"/>
<dbReference type="PDBsum" id="4G7S"/>
<dbReference type="PDBsum" id="4GP4"/>
<dbReference type="PDBsum" id="4GP5"/>
<dbReference type="PDBsum" id="4GP8"/>
<dbReference type="PDBsum" id="4N4Y"/>
<dbReference type="PDBsum" id="5NDC"/>
<dbReference type="PDBsum" id="5U7N"/>
<dbReference type="PDBsum" id="6PTT"/>
<dbReference type="PDBsum" id="6PTY"/>
<dbReference type="PDBsum" id="8AJZ"/>
<dbReference type="PDBsum" id="8HUA"/>
<dbReference type="PDBsum" id="8K65"/>
<dbReference type="PDBsum" id="8K6Y"/>
<dbReference type="BMRB" id="Q5SJ80"/>
<dbReference type="SMR" id="Q5SJ80"/>
<dbReference type="DrugBank" id="DB02451">
    <property type="generic name" value="B-nonylglucoside"/>
</dbReference>
<dbReference type="TCDB" id="3.D.4.2.1">
    <property type="family name" value="the proton-translocating cytochrome oxidase (cox) superfamily"/>
</dbReference>
<dbReference type="EnsemblBacteria" id="BAD70957">
    <property type="protein sequence ID" value="BAD70957"/>
    <property type="gene ID" value="BAD70957"/>
</dbReference>
<dbReference type="GeneID" id="3169672"/>
<dbReference type="KEGG" id="ttj:TTHA1134"/>
<dbReference type="PATRIC" id="fig|300852.9.peg.1113"/>
<dbReference type="eggNOG" id="COG1622">
    <property type="taxonomic scope" value="Bacteria"/>
</dbReference>
<dbReference type="HOGENOM" id="CLU_120355_0_0_0"/>
<dbReference type="PhylomeDB" id="Q5SJ80"/>
<dbReference type="BioCyc" id="MetaCyc:MONOMER-21001"/>
<dbReference type="BRENDA" id="7.1.1.9">
    <property type="organism ID" value="2305"/>
</dbReference>
<dbReference type="EvolutionaryTrace" id="Q5SJ80"/>
<dbReference type="Proteomes" id="UP000000532">
    <property type="component" value="Chromosome"/>
</dbReference>
<dbReference type="GO" id="GO:0005886">
    <property type="term" value="C:plasma membrane"/>
    <property type="evidence" value="ECO:0007669"/>
    <property type="project" value="UniProtKB-SubCell"/>
</dbReference>
<dbReference type="GO" id="GO:0005507">
    <property type="term" value="F:copper ion binding"/>
    <property type="evidence" value="ECO:0007669"/>
    <property type="project" value="InterPro"/>
</dbReference>
<dbReference type="GO" id="GO:0004129">
    <property type="term" value="F:cytochrome-c oxidase activity"/>
    <property type="evidence" value="ECO:0007669"/>
    <property type="project" value="UniProtKB-EC"/>
</dbReference>
<dbReference type="CDD" id="cd13913">
    <property type="entry name" value="ba3_CcO_II_C"/>
    <property type="match status" value="1"/>
</dbReference>
<dbReference type="Gene3D" id="2.60.40.420">
    <property type="entry name" value="Cupredoxins - blue copper proteins"/>
    <property type="match status" value="1"/>
</dbReference>
<dbReference type="Gene3D" id="1.20.1070.10">
    <property type="entry name" value="Rhodopsin 7-helix transmembrane proteins"/>
    <property type="match status" value="1"/>
</dbReference>
<dbReference type="InterPro" id="IPR034214">
    <property type="entry name" value="Ba3_CcO_II_C"/>
</dbReference>
<dbReference type="InterPro" id="IPR002429">
    <property type="entry name" value="CcO_II-like_C"/>
</dbReference>
<dbReference type="InterPro" id="IPR001505">
    <property type="entry name" value="Copper_CuA"/>
</dbReference>
<dbReference type="InterPro" id="IPR008972">
    <property type="entry name" value="Cupredoxin"/>
</dbReference>
<dbReference type="InterPro" id="IPR036257">
    <property type="entry name" value="Cyt_c_oxidase_su2_TM_sf"/>
</dbReference>
<dbReference type="InterPro" id="IPR015209">
    <property type="entry name" value="Cyt_c_oxidase_su2a_TM_dom"/>
</dbReference>
<dbReference type="InterPro" id="IPR051403">
    <property type="entry name" value="NosZ/Cyto_c_oxidase_sub2"/>
</dbReference>
<dbReference type="PANTHER" id="PTHR42838">
    <property type="entry name" value="CYTOCHROME C OXIDASE SUBUNIT II"/>
    <property type="match status" value="1"/>
</dbReference>
<dbReference type="PANTHER" id="PTHR42838:SF2">
    <property type="entry name" value="NITROUS-OXIDE REDUCTASE"/>
    <property type="match status" value="1"/>
</dbReference>
<dbReference type="Pfam" id="PF00116">
    <property type="entry name" value="COX2"/>
    <property type="match status" value="1"/>
</dbReference>
<dbReference type="Pfam" id="PF09125">
    <property type="entry name" value="COX2-transmemb"/>
    <property type="match status" value="1"/>
</dbReference>
<dbReference type="SUPFAM" id="SSF49503">
    <property type="entry name" value="Cupredoxins"/>
    <property type="match status" value="1"/>
</dbReference>
<dbReference type="SUPFAM" id="SSF81464">
    <property type="entry name" value="Cytochrome c oxidase subunit II-like, transmembrane region"/>
    <property type="match status" value="1"/>
</dbReference>
<dbReference type="PROSITE" id="PS00078">
    <property type="entry name" value="COX2"/>
    <property type="match status" value="1"/>
</dbReference>
<dbReference type="PROSITE" id="PS50857">
    <property type="entry name" value="COX2_CUA"/>
    <property type="match status" value="1"/>
</dbReference>
<proteinExistence type="evidence at protein level"/>
<feature type="chain" id="PRO_0000183722" description="Cytochrome c oxidase subunit 2">
    <location>
        <begin position="1"/>
        <end position="168"/>
    </location>
</feature>
<feature type="topological domain" description="Cytoplasmic">
    <location>
        <begin position="1"/>
        <end position="3"/>
    </location>
</feature>
<feature type="transmembrane region" description="Helical">
    <location>
        <begin position="4"/>
        <end position="38"/>
    </location>
</feature>
<feature type="topological domain" description="Periplasmic">
    <location>
        <begin position="39"/>
        <end position="168"/>
    </location>
</feature>
<feature type="binding site">
    <location>
        <position position="114"/>
    </location>
    <ligand>
        <name>Cu cation</name>
        <dbReference type="ChEBI" id="CHEBI:23378"/>
        <label>A</label>
    </ligand>
</feature>
<feature type="binding site">
    <location>
        <position position="149"/>
    </location>
    <ligand>
        <name>Cu cation</name>
        <dbReference type="ChEBI" id="CHEBI:23378"/>
        <label>A</label>
    </ligand>
</feature>
<feature type="binding site">
    <location>
        <position position="153"/>
    </location>
    <ligand>
        <name>Cu cation</name>
        <dbReference type="ChEBI" id="CHEBI:23378"/>
        <label>A</label>
    </ligand>
</feature>
<feature type="binding site">
    <location>
        <position position="157"/>
    </location>
    <ligand>
        <name>Cu cation</name>
        <dbReference type="ChEBI" id="CHEBI:23378"/>
        <label>A</label>
    </ligand>
</feature>
<feature type="helix" evidence="2">
    <location>
        <begin position="4"/>
        <end position="36"/>
    </location>
</feature>
<feature type="helix" evidence="2">
    <location>
        <begin position="40"/>
        <end position="44"/>
    </location>
</feature>
<feature type="turn" evidence="2">
    <location>
        <begin position="55"/>
        <end position="60"/>
    </location>
</feature>
<feature type="turn" evidence="3">
    <location>
        <begin position="63"/>
        <end position="65"/>
    </location>
</feature>
<feature type="helix" evidence="2">
    <location>
        <begin position="67"/>
        <end position="69"/>
    </location>
</feature>
<feature type="strand" evidence="2">
    <location>
        <begin position="71"/>
        <end position="75"/>
    </location>
</feature>
<feature type="strand" evidence="2">
    <location>
        <begin position="78"/>
        <end position="86"/>
    </location>
</feature>
<feature type="strand" evidence="2">
    <location>
        <begin position="89"/>
        <end position="98"/>
    </location>
</feature>
<feature type="strand" evidence="2">
    <location>
        <begin position="101"/>
        <end position="108"/>
    </location>
</feature>
<feature type="strand" evidence="2">
    <location>
        <begin position="110"/>
        <end position="112"/>
    </location>
</feature>
<feature type="strand" evidence="2">
    <location>
        <begin position="114"/>
        <end position="118"/>
    </location>
</feature>
<feature type="strand" evidence="2">
    <location>
        <begin position="124"/>
        <end position="127"/>
    </location>
</feature>
<feature type="strand" evidence="2">
    <location>
        <begin position="133"/>
        <end position="138"/>
    </location>
</feature>
<feature type="strand" evidence="2">
    <location>
        <begin position="143"/>
        <end position="148"/>
    </location>
</feature>
<feature type="helix" evidence="2">
    <location>
        <begin position="157"/>
        <end position="159"/>
    </location>
</feature>
<feature type="strand" evidence="2">
    <location>
        <begin position="161"/>
        <end position="167"/>
    </location>
</feature>
<comment type="function">
    <text>Subunits I and II form the functional core of the enzyme complex. Electrons originating in cytochrome c are transferred via heme a and Cu(A) to the binuclear center formed by heme a3 and Cu(B).</text>
</comment>
<comment type="catalytic activity">
    <reaction>
        <text>4 Fe(II)-[cytochrome c] + O2 + 8 H(+)(in) = 4 Fe(III)-[cytochrome c] + 2 H2O + 4 H(+)(out)</text>
        <dbReference type="Rhea" id="RHEA:11436"/>
        <dbReference type="Rhea" id="RHEA-COMP:10350"/>
        <dbReference type="Rhea" id="RHEA-COMP:14399"/>
        <dbReference type="ChEBI" id="CHEBI:15377"/>
        <dbReference type="ChEBI" id="CHEBI:15378"/>
        <dbReference type="ChEBI" id="CHEBI:15379"/>
        <dbReference type="ChEBI" id="CHEBI:29033"/>
        <dbReference type="ChEBI" id="CHEBI:29034"/>
        <dbReference type="EC" id="7.1.1.9"/>
    </reaction>
</comment>
<comment type="subcellular location">
    <subcellularLocation>
        <location>Cell membrane</location>
        <topology>Single-pass membrane protein</topology>
    </subcellularLocation>
</comment>
<comment type="similarity">
    <text evidence="1">Belongs to the cytochrome c oxidase subunit 2 family.</text>
</comment>
<evidence type="ECO:0000305" key="1"/>
<evidence type="ECO:0007829" key="2">
    <source>
        <dbReference type="PDB" id="3S8F"/>
    </source>
</evidence>
<evidence type="ECO:0007829" key="3">
    <source>
        <dbReference type="PDB" id="8K6Y"/>
    </source>
</evidence>
<protein>
    <recommendedName>
        <fullName>Cytochrome c oxidase subunit 2</fullName>
        <ecNumber>7.1.1.9</ecNumber>
    </recommendedName>
    <alternativeName>
        <fullName>Cytochrome c ba(3) subunit II</fullName>
    </alternativeName>
    <alternativeName>
        <fullName>Cytochrome c oxidase polypeptide II</fullName>
    </alternativeName>
    <alternativeName>
        <fullName>Cytochrome cba3 subunit 2</fullName>
    </alternativeName>
</protein>
<reference key="1">
    <citation type="journal article" date="1995" name="J. Biol. Chem.">
        <title>Molecular genetic and protein chemical characterization of the cytochrome ba3 from Thermus thermophilus HB8.</title>
        <authorList>
            <person name="Keightley J.A."/>
            <person name="Zimmermann B.H."/>
            <person name="Mather M.W."/>
            <person name="Springer P."/>
            <person name="Pastuszyn A."/>
            <person name="Lawrence D.M."/>
            <person name="Fee J.A."/>
        </authorList>
    </citation>
    <scope>NUCLEOTIDE SEQUENCE [GENOMIC DNA]</scope>
    <scope>PROTEIN SEQUENCE OF 1-30</scope>
</reference>
<reference key="2">
    <citation type="submission" date="2004-11" db="EMBL/GenBank/DDBJ databases">
        <title>Complete genome sequence of Thermus thermophilus HB8.</title>
        <authorList>
            <person name="Masui R."/>
            <person name="Kurokawa K."/>
            <person name="Nakagawa N."/>
            <person name="Tokunaga F."/>
            <person name="Koyama Y."/>
            <person name="Shibata T."/>
            <person name="Oshima T."/>
            <person name="Yokoyama S."/>
            <person name="Yasunaga T."/>
            <person name="Kuramitsu S."/>
        </authorList>
    </citation>
    <scope>NUCLEOTIDE SEQUENCE [LARGE SCALE GENOMIC DNA]</scope>
    <source>
        <strain>ATCC 27634 / DSM 579 / HB8</strain>
    </source>
</reference>
<reference key="3">
    <citation type="journal article" date="2000" name="EMBO J.">
        <title>Structure and mechanism of the aberrant ba3-cytochrome c oxidase from Thermus thermophilus.</title>
        <authorList>
            <person name="Soulimane T."/>
            <person name="Buse G."/>
            <person name="Bourenkov G.P."/>
            <person name="Bartunik H.D."/>
            <person name="Huber R."/>
            <person name="Than M.E."/>
        </authorList>
    </citation>
    <scope>X-RAY CRYSTALLOGRAPHY (2.4 ANGSTROMS)</scope>
</reference>
<sequence length="168" mass="18563">MVDEHKAHKAILAYEKGWLAFSLAMLFVFIALIAYTLATHTAGVIPAGKLERVDPTTVRQEGPWADPAQAVVQTGPNQYTVYVLAFAFGYQPNPIEVPQGAEIVFKITSPDVIHGFHVEGTNINVEVLPGEVSTVRYTFKRPGEYRIICNQYCGLGHQNMFGTIVVKE</sequence>
<organism>
    <name type="scientific">Thermus thermophilus (strain ATCC 27634 / DSM 579 / HB8)</name>
    <dbReference type="NCBI Taxonomy" id="300852"/>
    <lineage>
        <taxon>Bacteria</taxon>
        <taxon>Thermotogati</taxon>
        <taxon>Deinococcota</taxon>
        <taxon>Deinococci</taxon>
        <taxon>Thermales</taxon>
        <taxon>Thermaceae</taxon>
        <taxon>Thermus</taxon>
    </lineage>
</organism>
<gene>
    <name type="primary">cbaB</name>
    <name type="synonym">ctaC</name>
    <name type="ordered locus">TTHA1134</name>
</gene>
<keyword id="KW-0002">3D-structure</keyword>
<keyword id="KW-1003">Cell membrane</keyword>
<keyword id="KW-0186">Copper</keyword>
<keyword id="KW-0903">Direct protein sequencing</keyword>
<keyword id="KW-0249">Electron transport</keyword>
<keyword id="KW-0472">Membrane</keyword>
<keyword id="KW-0479">Metal-binding</keyword>
<keyword id="KW-1185">Reference proteome</keyword>
<keyword id="KW-0679">Respiratory chain</keyword>
<keyword id="KW-1278">Translocase</keyword>
<keyword id="KW-0812">Transmembrane</keyword>
<keyword id="KW-1133">Transmembrane helix</keyword>
<keyword id="KW-0813">Transport</keyword>
<name>COX2_THET8</name>
<accession>Q5SJ80</accession>